<sequence length="386" mass="44217">MSKSWISKRESKLLYILLTTTELYLKTGQPVGSKTLKEYECSNLSTATIRNYFAELEAEGFLKKNHVSGGRIPTDLAFRYYVDHRADFLQDDLPETTIHLLNQLPKESQNIVKDLQKASELLGEALQLPTCFSSPRFENDSVTNIQLSLVDEQRVVVILSTEFGQIFTDTLWLAETSNYASLKRIETFLQNYLRKQPPSETLSQKEEDLGMTLYNEVVVRYLTRYCNFSEEDLYQTGLSKLLKYDAFKDPDMLALGLSFFESRCHMCKLLDIGMHRDRPTAFIGSELSDIFGTPNPHCAVITTPYYMNRTPLGAFGVLGPINLPYREIYKTLTIFADKVKESLTQSFYKFKLSFRRPCPSDPKLSKEPTLLARYSSIKLLPPKETS</sequence>
<comment type="function">
    <text evidence="1">Negative regulator of class I heat shock genes (grpE-dnaK-dnaJ and groELS operons). Prevents heat-shock induction of these operons.</text>
</comment>
<comment type="similarity">
    <text evidence="1">Belongs to the HrcA family.</text>
</comment>
<name>HRCA_CHLAB</name>
<keyword id="KW-0678">Repressor</keyword>
<keyword id="KW-0346">Stress response</keyword>
<keyword id="KW-0804">Transcription</keyword>
<keyword id="KW-0805">Transcription regulation</keyword>
<protein>
    <recommendedName>
        <fullName evidence="1">Heat-inducible transcription repressor HrcA</fullName>
    </recommendedName>
</protein>
<organism>
    <name type="scientific">Chlamydia abortus (strain DSM 27085 / S26/3)</name>
    <name type="common">Chlamydophila abortus</name>
    <dbReference type="NCBI Taxonomy" id="218497"/>
    <lineage>
        <taxon>Bacteria</taxon>
        <taxon>Pseudomonadati</taxon>
        <taxon>Chlamydiota</taxon>
        <taxon>Chlamydiia</taxon>
        <taxon>Chlamydiales</taxon>
        <taxon>Chlamydiaceae</taxon>
        <taxon>Chlamydia/Chlamydophila group</taxon>
        <taxon>Chlamydia</taxon>
    </lineage>
</organism>
<gene>
    <name evidence="1" type="primary">hrcA</name>
    <name type="ordered locus">CAB239</name>
</gene>
<accession>Q8GH81</accession>
<accession>Q5L6M6</accession>
<evidence type="ECO:0000255" key="1">
    <source>
        <dbReference type="HAMAP-Rule" id="MF_00081"/>
    </source>
</evidence>
<proteinExistence type="inferred from homology"/>
<reference key="1">
    <citation type="journal article" date="2002" name="Vet. Res.">
        <title>Protection evaluation against Chlamydophila abortus challenge by DNA vaccination with a dnaK-encoding plasmid in pregnant and non-pregnant mice.</title>
        <authorList>
            <person name="Hechard C."/>
            <person name="Grepinet O."/>
            <person name="Rodolakis A."/>
        </authorList>
    </citation>
    <scope>NUCLEOTIDE SEQUENCE [GENOMIC DNA]</scope>
    <source>
        <strain>AB7</strain>
    </source>
</reference>
<reference key="2">
    <citation type="journal article" date="2005" name="Genome Res.">
        <title>The Chlamydophila abortus genome sequence reveals an array of variable proteins that contribute to interspecies variation.</title>
        <authorList>
            <person name="Thomson N.R."/>
            <person name="Yeats C."/>
            <person name="Bell K."/>
            <person name="Holden M.T.G."/>
            <person name="Bentley S.D."/>
            <person name="Livingstone M."/>
            <person name="Cerdeno-Tarraga A.-M."/>
            <person name="Harris B."/>
            <person name="Doggett J."/>
            <person name="Ormond D."/>
            <person name="Mungall K."/>
            <person name="Clarke K."/>
            <person name="Feltwell T."/>
            <person name="Hance Z."/>
            <person name="Sanders M."/>
            <person name="Quail M.A."/>
            <person name="Price C."/>
            <person name="Barrell B.G."/>
            <person name="Parkhill J."/>
            <person name="Longbottom D."/>
        </authorList>
    </citation>
    <scope>NUCLEOTIDE SEQUENCE [LARGE SCALE GENOMIC DNA]</scope>
    <source>
        <strain>DSM 27085 / S26/3</strain>
    </source>
</reference>
<feature type="chain" id="PRO_0000182464" description="Heat-inducible transcription repressor HrcA">
    <location>
        <begin position="1"/>
        <end position="386"/>
    </location>
</feature>
<dbReference type="EMBL" id="AF384685">
    <property type="protein sequence ID" value="AAN77257.1"/>
    <property type="molecule type" value="Genomic_DNA"/>
</dbReference>
<dbReference type="EMBL" id="CR848038">
    <property type="protein sequence ID" value="CAH63695.1"/>
    <property type="molecule type" value="Genomic_DNA"/>
</dbReference>
<dbReference type="RefSeq" id="WP_011096925.1">
    <property type="nucleotide sequence ID" value="NC_004552.2"/>
</dbReference>
<dbReference type="SMR" id="Q8GH81"/>
<dbReference type="KEGG" id="cab:CAB239"/>
<dbReference type="eggNOG" id="COG1420">
    <property type="taxonomic scope" value="Bacteria"/>
</dbReference>
<dbReference type="HOGENOM" id="CLU_050019_1_0_0"/>
<dbReference type="OrthoDB" id="9783139at2"/>
<dbReference type="Proteomes" id="UP000001012">
    <property type="component" value="Chromosome"/>
</dbReference>
<dbReference type="GO" id="GO:0003677">
    <property type="term" value="F:DNA binding"/>
    <property type="evidence" value="ECO:0007669"/>
    <property type="project" value="InterPro"/>
</dbReference>
<dbReference type="GO" id="GO:0045892">
    <property type="term" value="P:negative regulation of DNA-templated transcription"/>
    <property type="evidence" value="ECO:0007669"/>
    <property type="project" value="UniProtKB-UniRule"/>
</dbReference>
<dbReference type="Gene3D" id="3.30.450.40">
    <property type="match status" value="1"/>
</dbReference>
<dbReference type="Gene3D" id="1.10.10.10">
    <property type="entry name" value="Winged helix-like DNA-binding domain superfamily/Winged helix DNA-binding domain"/>
    <property type="match status" value="1"/>
</dbReference>
<dbReference type="HAMAP" id="MF_00081">
    <property type="entry name" value="HrcA"/>
    <property type="match status" value="1"/>
</dbReference>
<dbReference type="InterPro" id="IPR029016">
    <property type="entry name" value="GAF-like_dom_sf"/>
</dbReference>
<dbReference type="InterPro" id="IPR002571">
    <property type="entry name" value="HrcA"/>
</dbReference>
<dbReference type="InterPro" id="IPR021153">
    <property type="entry name" value="HrcA_C"/>
</dbReference>
<dbReference type="InterPro" id="IPR036388">
    <property type="entry name" value="WH-like_DNA-bd_sf"/>
</dbReference>
<dbReference type="InterPro" id="IPR036390">
    <property type="entry name" value="WH_DNA-bd_sf"/>
</dbReference>
<dbReference type="NCBIfam" id="TIGR00331">
    <property type="entry name" value="hrcA"/>
    <property type="match status" value="1"/>
</dbReference>
<dbReference type="PANTHER" id="PTHR34824">
    <property type="entry name" value="HEAT-INDUCIBLE TRANSCRIPTION REPRESSOR HRCA"/>
    <property type="match status" value="1"/>
</dbReference>
<dbReference type="PANTHER" id="PTHR34824:SF1">
    <property type="entry name" value="HEAT-INDUCIBLE TRANSCRIPTION REPRESSOR HRCA"/>
    <property type="match status" value="1"/>
</dbReference>
<dbReference type="Pfam" id="PF01628">
    <property type="entry name" value="HrcA"/>
    <property type="match status" value="1"/>
</dbReference>
<dbReference type="PIRSF" id="PIRSF005485">
    <property type="entry name" value="HrcA"/>
    <property type="match status" value="1"/>
</dbReference>
<dbReference type="SUPFAM" id="SSF55781">
    <property type="entry name" value="GAF domain-like"/>
    <property type="match status" value="1"/>
</dbReference>
<dbReference type="SUPFAM" id="SSF46785">
    <property type="entry name" value="Winged helix' DNA-binding domain"/>
    <property type="match status" value="1"/>
</dbReference>